<reference key="1">
    <citation type="submission" date="2006-10" db="EMBL/GenBank/DDBJ databases">
        <authorList>
            <person name="Fleischmann R.D."/>
            <person name="Dodson R.J."/>
            <person name="Haft D.H."/>
            <person name="Merkel J.S."/>
            <person name="Nelson W.C."/>
            <person name="Fraser C.M."/>
        </authorList>
    </citation>
    <scope>NUCLEOTIDE SEQUENCE [LARGE SCALE GENOMIC DNA]</scope>
    <source>
        <strain>ATCC 700084 / mc(2)155</strain>
    </source>
</reference>
<reference key="2">
    <citation type="journal article" date="2007" name="Genome Biol.">
        <title>Interrupted coding sequences in Mycobacterium smegmatis: authentic mutations or sequencing errors?</title>
        <authorList>
            <person name="Deshayes C."/>
            <person name="Perrodou E."/>
            <person name="Gallien S."/>
            <person name="Euphrasie D."/>
            <person name="Schaeffer C."/>
            <person name="Van-Dorsselaer A."/>
            <person name="Poch O."/>
            <person name="Lecompte O."/>
            <person name="Reyrat J.-M."/>
        </authorList>
    </citation>
    <scope>NUCLEOTIDE SEQUENCE [LARGE SCALE GENOMIC DNA]</scope>
    <source>
        <strain>ATCC 700084 / mc(2)155</strain>
    </source>
</reference>
<reference key="3">
    <citation type="journal article" date="2009" name="Genome Res.">
        <title>Ortho-proteogenomics: multiple proteomes investigation through orthology and a new MS-based protocol.</title>
        <authorList>
            <person name="Gallien S."/>
            <person name="Perrodou E."/>
            <person name="Carapito C."/>
            <person name="Deshayes C."/>
            <person name="Reyrat J.-M."/>
            <person name="Van Dorsselaer A."/>
            <person name="Poch O."/>
            <person name="Schaeffer C."/>
            <person name="Lecompte O."/>
        </authorList>
    </citation>
    <scope>NUCLEOTIDE SEQUENCE [LARGE SCALE GENOMIC DNA]</scope>
    <scope>IDENTIFICATION BY MASS SPECTROMETRY [LARGE SCALE ANALYSIS]</scope>
    <scope>CLEAVAGE OF INITIATOR METHIONINE</scope>
    <source>
        <strain>ATCC 700084 / mc(2)155</strain>
    </source>
</reference>
<feature type="initiator methionine" description="Removed" evidence="3">
    <location>
        <position position="1"/>
    </location>
</feature>
<feature type="chain" id="PRO_0000329720" description="Polyribonucleotide nucleotidyltransferase">
    <location>
        <begin position="2"/>
        <end position="763"/>
    </location>
</feature>
<feature type="domain" description="KH" evidence="1">
    <location>
        <begin position="592"/>
        <end position="651"/>
    </location>
</feature>
<feature type="domain" description="S1 motif" evidence="1">
    <location>
        <begin position="663"/>
        <end position="732"/>
    </location>
</feature>
<feature type="region of interest" description="Disordered" evidence="2">
    <location>
        <begin position="739"/>
        <end position="763"/>
    </location>
</feature>
<feature type="compositionally biased region" description="Basic and acidic residues" evidence="2">
    <location>
        <begin position="743"/>
        <end position="752"/>
    </location>
</feature>
<feature type="binding site" evidence="1">
    <location>
        <position position="526"/>
    </location>
    <ligand>
        <name>Mg(2+)</name>
        <dbReference type="ChEBI" id="CHEBI:18420"/>
    </ligand>
</feature>
<feature type="binding site" evidence="1">
    <location>
        <position position="532"/>
    </location>
    <ligand>
        <name>Mg(2+)</name>
        <dbReference type="ChEBI" id="CHEBI:18420"/>
    </ligand>
</feature>
<feature type="strand" evidence="4">
    <location>
        <begin position="11"/>
        <end position="18"/>
    </location>
</feature>
<feature type="strand" evidence="4">
    <location>
        <begin position="24"/>
        <end position="34"/>
    </location>
</feature>
<feature type="strand" evidence="4">
    <location>
        <begin position="38"/>
        <end position="46"/>
    </location>
</feature>
<feature type="turn" evidence="4">
    <location>
        <begin position="47"/>
        <end position="49"/>
    </location>
</feature>
<feature type="strand" evidence="4">
    <location>
        <begin position="50"/>
        <end position="57"/>
    </location>
</feature>
<feature type="strand" evidence="4">
    <location>
        <begin position="72"/>
        <end position="77"/>
    </location>
</feature>
<feature type="helix" evidence="4">
    <location>
        <begin position="79"/>
        <end position="82"/>
    </location>
</feature>
<feature type="helix" evidence="4">
    <location>
        <begin position="98"/>
        <end position="111"/>
    </location>
</feature>
<feature type="helix" evidence="4">
    <location>
        <begin position="112"/>
        <end position="114"/>
    </location>
</feature>
<feature type="strand" evidence="4">
    <location>
        <begin position="124"/>
        <end position="131"/>
    </location>
</feature>
<feature type="helix" evidence="4">
    <location>
        <begin position="139"/>
        <end position="152"/>
    </location>
</feature>
<feature type="strand" evidence="4">
    <location>
        <begin position="162"/>
        <end position="169"/>
    </location>
</feature>
<feature type="strand" evidence="4">
    <location>
        <begin position="172"/>
        <end position="176"/>
    </location>
</feature>
<feature type="turn" evidence="4">
    <location>
        <begin position="179"/>
        <end position="183"/>
    </location>
</feature>
<feature type="strand" evidence="4">
    <location>
        <begin position="184"/>
        <end position="195"/>
    </location>
</feature>
<feature type="strand" evidence="4">
    <location>
        <begin position="204"/>
        <end position="213"/>
    </location>
</feature>
<feature type="helix" evidence="4">
    <location>
        <begin position="217"/>
        <end position="223"/>
    </location>
</feature>
<feature type="helix" evidence="4">
    <location>
        <begin position="230"/>
        <end position="239"/>
    </location>
</feature>
<feature type="helix" evidence="4">
    <location>
        <begin position="241"/>
        <end position="257"/>
    </location>
</feature>
<feature type="helix" evidence="4">
    <location>
        <begin position="273"/>
        <end position="291"/>
    </location>
</feature>
<feature type="strand" evidence="4">
    <location>
        <begin position="292"/>
        <end position="294"/>
    </location>
</feature>
<feature type="helix" evidence="4">
    <location>
        <begin position="296"/>
        <end position="313"/>
    </location>
</feature>
<feature type="turn" evidence="4">
    <location>
        <begin position="314"/>
        <end position="320"/>
    </location>
</feature>
<feature type="helix" evidence="4">
    <location>
        <begin position="322"/>
        <end position="344"/>
    </location>
</feature>
<feature type="strand" evidence="4">
    <location>
        <begin position="359"/>
        <end position="363"/>
    </location>
</feature>
<feature type="strand" evidence="4">
    <location>
        <begin position="370"/>
        <end position="377"/>
    </location>
</feature>
<feature type="strand" evidence="4">
    <location>
        <begin position="380"/>
        <end position="386"/>
    </location>
</feature>
<feature type="helix" evidence="4">
    <location>
        <begin position="391"/>
        <end position="393"/>
    </location>
</feature>
<feature type="strand" evidence="4">
    <location>
        <begin position="394"/>
        <end position="396"/>
    </location>
</feature>
<feature type="strand" evidence="4">
    <location>
        <begin position="399"/>
        <end position="402"/>
    </location>
</feature>
<feature type="strand" evidence="4">
    <location>
        <begin position="405"/>
        <end position="413"/>
    </location>
</feature>
<feature type="helix" evidence="4">
    <location>
        <begin position="416"/>
        <end position="418"/>
    </location>
</feature>
<feature type="helix" evidence="4">
    <location>
        <begin position="430"/>
        <end position="440"/>
    </location>
</feature>
<feature type="turn" evidence="4">
    <location>
        <begin position="441"/>
        <end position="443"/>
    </location>
</feature>
<feature type="helix" evidence="4">
    <location>
        <begin position="444"/>
        <end position="446"/>
    </location>
</feature>
<feature type="turn" evidence="4">
    <location>
        <begin position="450"/>
        <end position="452"/>
    </location>
</feature>
<feature type="strand" evidence="4">
    <location>
        <begin position="458"/>
        <end position="465"/>
    </location>
</feature>
<feature type="helix" evidence="4">
    <location>
        <begin position="471"/>
        <end position="484"/>
    </location>
</feature>
<feature type="strand" evidence="4">
    <location>
        <begin position="494"/>
        <end position="507"/>
    </location>
</feature>
<feature type="strand" evidence="4">
    <location>
        <begin position="510"/>
        <end position="520"/>
    </location>
</feature>
<feature type="helix" evidence="4">
    <location>
        <begin position="524"/>
        <end position="526"/>
    </location>
</feature>
<feature type="strand" evidence="4">
    <location>
        <begin position="530"/>
        <end position="537"/>
    </location>
</feature>
<feature type="strand" evidence="4">
    <location>
        <begin position="539"/>
        <end position="549"/>
    </location>
</feature>
<feature type="helix" evidence="4">
    <location>
        <begin position="556"/>
        <end position="580"/>
    </location>
</feature>
<organism>
    <name type="scientific">Mycolicibacterium smegmatis (strain ATCC 700084 / mc(2)155)</name>
    <name type="common">Mycobacterium smegmatis</name>
    <dbReference type="NCBI Taxonomy" id="246196"/>
    <lineage>
        <taxon>Bacteria</taxon>
        <taxon>Bacillati</taxon>
        <taxon>Actinomycetota</taxon>
        <taxon>Actinomycetes</taxon>
        <taxon>Mycobacteriales</taxon>
        <taxon>Mycobacteriaceae</taxon>
        <taxon>Mycolicibacterium</taxon>
    </lineage>
</organism>
<comment type="function">
    <text evidence="1">Involved in mRNA degradation. Catalyzes the phosphorolysis of single-stranded polyribonucleotides processively in the 3'- to 5'-direction.</text>
</comment>
<comment type="catalytic activity">
    <reaction evidence="1">
        <text>RNA(n+1) + phosphate = RNA(n) + a ribonucleoside 5'-diphosphate</text>
        <dbReference type="Rhea" id="RHEA:22096"/>
        <dbReference type="Rhea" id="RHEA-COMP:14527"/>
        <dbReference type="Rhea" id="RHEA-COMP:17342"/>
        <dbReference type="ChEBI" id="CHEBI:43474"/>
        <dbReference type="ChEBI" id="CHEBI:57930"/>
        <dbReference type="ChEBI" id="CHEBI:140395"/>
        <dbReference type="EC" id="2.7.7.8"/>
    </reaction>
</comment>
<comment type="cofactor">
    <cofactor evidence="1">
        <name>Mg(2+)</name>
        <dbReference type="ChEBI" id="CHEBI:18420"/>
    </cofactor>
</comment>
<comment type="subcellular location">
    <subcellularLocation>
        <location evidence="1">Cytoplasm</location>
    </subcellularLocation>
</comment>
<comment type="similarity">
    <text evidence="1">Belongs to the polyribonucleotide nucleotidyltransferase family.</text>
</comment>
<sequence length="763" mass="81027">MSVVELEDGVYESTAVIDNGSFGTRTIRFETGRLAQQAAGSAVAYLDDETMLLSATTASKNPKDHFDFFPLTVDVEERMYAAGRIPGSFFRREGRPSTDAILTCRLIDRPLRPSFVDGLRNEIQVVVTVMSLDPKDLYDVLAINAASMSTQLAGLPFSGPVGGARIALIDGTWVAFPTVEQLERAVFDMVVAGRIVGDGDSADVAIMMVEAEATENVVELVAGGAQAPTEAVVAEGLEAAKPFIKALCAAQQELADRAAKPAGEYPVFPDYEADVYDAVASVATEALAEALTIAGKTERNDRTDEIKVEVLERLAEPYAGREKEIGAAFRSLTKKLVRQRILTDHFRIDGRGITDIRALSAEVAVIPRAHGSALFERGETQILGVTTLDMIKMAQQIDSLGPENTKRYMHHYNFPPYSTGETGRVGSPKRREIGHGALAERALVPVLPSIEEFPYAIRQVSEALGSNGSTSMGSVCASTLALLNAGVPLKAPVAGIAMGLVSDDVDVDGKVEKRYVALTDILGAEDAFGDMDFKVAGTKDFVTALQLDTKLDGIPSQVLAGALSQAKDARLTILDVMAEAIDRPDEMSPYAPRITTIKVPVDKIGEVIGPKGKMINSITEETGAQISIEDDGTVFVGAADGLSAQAAIDKINAIANPQLPKVGERFLGTVVKTTDFGAFVSLLPGRDGLVHISKLGKGKRIAKVEDVVKVGDKLRVEIADIDNRGKISLVLVAEESAESAESAGDKGAEKAEGAAADVTPAEA</sequence>
<proteinExistence type="evidence at protein level"/>
<keyword id="KW-0002">3D-structure</keyword>
<keyword id="KW-0963">Cytoplasm</keyword>
<keyword id="KW-0460">Magnesium</keyword>
<keyword id="KW-0479">Metal-binding</keyword>
<keyword id="KW-0548">Nucleotidyltransferase</keyword>
<keyword id="KW-1185">Reference proteome</keyword>
<keyword id="KW-0694">RNA-binding</keyword>
<keyword id="KW-0808">Transferase</keyword>
<dbReference type="EC" id="2.7.7.8" evidence="1"/>
<dbReference type="EMBL" id="CP000480">
    <property type="protein sequence ID" value="ABK73464.1"/>
    <property type="molecule type" value="Genomic_DNA"/>
</dbReference>
<dbReference type="EMBL" id="CP001663">
    <property type="protein sequence ID" value="AFP39061.1"/>
    <property type="molecule type" value="Genomic_DNA"/>
</dbReference>
<dbReference type="RefSeq" id="WP_011728507.1">
    <property type="nucleotide sequence ID" value="NZ_SIJM01000064.1"/>
</dbReference>
<dbReference type="RefSeq" id="YP_886993.1">
    <property type="nucleotide sequence ID" value="NC_008596.1"/>
</dbReference>
<dbReference type="PDB" id="7LD5">
    <property type="method" value="EM"/>
    <property type="resolution" value="3.07 A"/>
    <property type="chains" value="A/B/C=1-763"/>
</dbReference>
<dbReference type="PDBsum" id="7LD5"/>
<dbReference type="EMDB" id="EMD-23282"/>
<dbReference type="SMR" id="A0QVQ5"/>
<dbReference type="STRING" id="246196.MSMEG_2656"/>
<dbReference type="PaxDb" id="246196-MSMEI_2593"/>
<dbReference type="KEGG" id="msb:LJ00_13220"/>
<dbReference type="KEGG" id="msg:MSMEI_2593"/>
<dbReference type="KEGG" id="msm:MSMEG_2656"/>
<dbReference type="PATRIC" id="fig|246196.19.peg.2622"/>
<dbReference type="eggNOG" id="COG1185">
    <property type="taxonomic scope" value="Bacteria"/>
</dbReference>
<dbReference type="OrthoDB" id="9804305at2"/>
<dbReference type="BRENDA" id="2.7.7.8">
    <property type="organism ID" value="3512"/>
</dbReference>
<dbReference type="Proteomes" id="UP000000757">
    <property type="component" value="Chromosome"/>
</dbReference>
<dbReference type="Proteomes" id="UP000006158">
    <property type="component" value="Chromosome"/>
</dbReference>
<dbReference type="GO" id="GO:0005829">
    <property type="term" value="C:cytosol"/>
    <property type="evidence" value="ECO:0007669"/>
    <property type="project" value="TreeGrafter"/>
</dbReference>
<dbReference type="GO" id="GO:0000175">
    <property type="term" value="F:3'-5'-RNA exonuclease activity"/>
    <property type="evidence" value="ECO:0007669"/>
    <property type="project" value="TreeGrafter"/>
</dbReference>
<dbReference type="GO" id="GO:0000287">
    <property type="term" value="F:magnesium ion binding"/>
    <property type="evidence" value="ECO:0007669"/>
    <property type="project" value="UniProtKB-UniRule"/>
</dbReference>
<dbReference type="GO" id="GO:0004654">
    <property type="term" value="F:polyribonucleotide nucleotidyltransferase activity"/>
    <property type="evidence" value="ECO:0007669"/>
    <property type="project" value="UniProtKB-UniRule"/>
</dbReference>
<dbReference type="GO" id="GO:0003723">
    <property type="term" value="F:RNA binding"/>
    <property type="evidence" value="ECO:0007669"/>
    <property type="project" value="UniProtKB-UniRule"/>
</dbReference>
<dbReference type="GO" id="GO:0006402">
    <property type="term" value="P:mRNA catabolic process"/>
    <property type="evidence" value="ECO:0007669"/>
    <property type="project" value="UniProtKB-UniRule"/>
</dbReference>
<dbReference type="GO" id="GO:0006396">
    <property type="term" value="P:RNA processing"/>
    <property type="evidence" value="ECO:0007669"/>
    <property type="project" value="InterPro"/>
</dbReference>
<dbReference type="CDD" id="cd02393">
    <property type="entry name" value="KH-I_PNPase"/>
    <property type="match status" value="1"/>
</dbReference>
<dbReference type="CDD" id="cd11364">
    <property type="entry name" value="RNase_PH_PNPase_2"/>
    <property type="match status" value="1"/>
</dbReference>
<dbReference type="CDD" id="cd04472">
    <property type="entry name" value="S1_PNPase"/>
    <property type="match status" value="1"/>
</dbReference>
<dbReference type="FunFam" id="2.40.50.140:FF:000069">
    <property type="entry name" value="Polyribonucleotide nucleotidyltransferase"/>
    <property type="match status" value="1"/>
</dbReference>
<dbReference type="FunFam" id="3.30.1370.10:FF:000001">
    <property type="entry name" value="Polyribonucleotide nucleotidyltransferase"/>
    <property type="match status" value="1"/>
</dbReference>
<dbReference type="FunFam" id="3.30.230.70:FF:000001">
    <property type="entry name" value="Polyribonucleotide nucleotidyltransferase"/>
    <property type="match status" value="1"/>
</dbReference>
<dbReference type="FunFam" id="3.30.230.70:FF:000002">
    <property type="entry name" value="Polyribonucleotide nucleotidyltransferase"/>
    <property type="match status" value="1"/>
</dbReference>
<dbReference type="Gene3D" id="3.30.230.70">
    <property type="entry name" value="GHMP Kinase, N-terminal domain"/>
    <property type="match status" value="2"/>
</dbReference>
<dbReference type="Gene3D" id="3.30.1370.10">
    <property type="entry name" value="K Homology domain, type 1"/>
    <property type="match status" value="1"/>
</dbReference>
<dbReference type="Gene3D" id="2.40.50.140">
    <property type="entry name" value="Nucleic acid-binding proteins"/>
    <property type="match status" value="1"/>
</dbReference>
<dbReference type="HAMAP" id="MF_01595">
    <property type="entry name" value="PNPase"/>
    <property type="match status" value="1"/>
</dbReference>
<dbReference type="InterPro" id="IPR001247">
    <property type="entry name" value="ExoRNase_PH_dom1"/>
</dbReference>
<dbReference type="InterPro" id="IPR036345">
    <property type="entry name" value="ExoRNase_PH_dom2_sf"/>
</dbReference>
<dbReference type="InterPro" id="IPR014069">
    <property type="entry name" value="GPSI/PNP"/>
</dbReference>
<dbReference type="InterPro" id="IPR004087">
    <property type="entry name" value="KH_dom"/>
</dbReference>
<dbReference type="InterPro" id="IPR004088">
    <property type="entry name" value="KH_dom_type_1"/>
</dbReference>
<dbReference type="InterPro" id="IPR036612">
    <property type="entry name" value="KH_dom_type_1_sf"/>
</dbReference>
<dbReference type="InterPro" id="IPR012340">
    <property type="entry name" value="NA-bd_OB-fold"/>
</dbReference>
<dbReference type="InterPro" id="IPR012162">
    <property type="entry name" value="PNPase"/>
</dbReference>
<dbReference type="InterPro" id="IPR027408">
    <property type="entry name" value="PNPase/RNase_PH_dom_sf"/>
</dbReference>
<dbReference type="InterPro" id="IPR015848">
    <property type="entry name" value="PNPase_PH_RNA-bd_bac/org-type"/>
</dbReference>
<dbReference type="InterPro" id="IPR036456">
    <property type="entry name" value="PNPase_PH_RNA-bd_sf"/>
</dbReference>
<dbReference type="InterPro" id="IPR020568">
    <property type="entry name" value="Ribosomal_Su5_D2-typ_SF"/>
</dbReference>
<dbReference type="InterPro" id="IPR003029">
    <property type="entry name" value="S1_domain"/>
</dbReference>
<dbReference type="NCBIfam" id="TIGR03591">
    <property type="entry name" value="polynuc_phos"/>
    <property type="match status" value="1"/>
</dbReference>
<dbReference type="NCBIfam" id="TIGR02696">
    <property type="entry name" value="pppGpp_PNP"/>
    <property type="match status" value="1"/>
</dbReference>
<dbReference type="NCBIfam" id="NF008805">
    <property type="entry name" value="PRK11824.1"/>
    <property type="match status" value="1"/>
</dbReference>
<dbReference type="PANTHER" id="PTHR11252">
    <property type="entry name" value="POLYRIBONUCLEOTIDE NUCLEOTIDYLTRANSFERASE"/>
    <property type="match status" value="1"/>
</dbReference>
<dbReference type="PANTHER" id="PTHR11252:SF0">
    <property type="entry name" value="POLYRIBONUCLEOTIDE NUCLEOTIDYLTRANSFERASE 1, MITOCHONDRIAL"/>
    <property type="match status" value="1"/>
</dbReference>
<dbReference type="Pfam" id="PF00013">
    <property type="entry name" value="KH_1"/>
    <property type="match status" value="1"/>
</dbReference>
<dbReference type="Pfam" id="PF03726">
    <property type="entry name" value="PNPase"/>
    <property type="match status" value="1"/>
</dbReference>
<dbReference type="Pfam" id="PF01138">
    <property type="entry name" value="RNase_PH"/>
    <property type="match status" value="2"/>
</dbReference>
<dbReference type="Pfam" id="PF00575">
    <property type="entry name" value="S1"/>
    <property type="match status" value="1"/>
</dbReference>
<dbReference type="PIRSF" id="PIRSF005499">
    <property type="entry name" value="PNPase"/>
    <property type="match status" value="1"/>
</dbReference>
<dbReference type="SMART" id="SM00322">
    <property type="entry name" value="KH"/>
    <property type="match status" value="1"/>
</dbReference>
<dbReference type="SMART" id="SM00316">
    <property type="entry name" value="S1"/>
    <property type="match status" value="1"/>
</dbReference>
<dbReference type="SUPFAM" id="SSF54791">
    <property type="entry name" value="Eukaryotic type KH-domain (KH-domain type I)"/>
    <property type="match status" value="1"/>
</dbReference>
<dbReference type="SUPFAM" id="SSF50249">
    <property type="entry name" value="Nucleic acid-binding proteins"/>
    <property type="match status" value="1"/>
</dbReference>
<dbReference type="SUPFAM" id="SSF46915">
    <property type="entry name" value="Polynucleotide phosphorylase/guanosine pentaphosphate synthase (PNPase/GPSI), domain 3"/>
    <property type="match status" value="1"/>
</dbReference>
<dbReference type="SUPFAM" id="SSF55666">
    <property type="entry name" value="Ribonuclease PH domain 2-like"/>
    <property type="match status" value="2"/>
</dbReference>
<dbReference type="SUPFAM" id="SSF54211">
    <property type="entry name" value="Ribosomal protein S5 domain 2-like"/>
    <property type="match status" value="2"/>
</dbReference>
<dbReference type="PROSITE" id="PS50084">
    <property type="entry name" value="KH_TYPE_1"/>
    <property type="match status" value="1"/>
</dbReference>
<dbReference type="PROSITE" id="PS50126">
    <property type="entry name" value="S1"/>
    <property type="match status" value="1"/>
</dbReference>
<name>PNP_MYCS2</name>
<gene>
    <name evidence="1" type="primary">pnp</name>
    <name type="synonym">gpsI</name>
    <name type="ordered locus">MSMEG_2656</name>
    <name type="ordered locus">MSMEI_2593</name>
</gene>
<accession>A0QVQ5</accession>
<accession>I7G725</accession>
<evidence type="ECO:0000255" key="1">
    <source>
        <dbReference type="HAMAP-Rule" id="MF_01595"/>
    </source>
</evidence>
<evidence type="ECO:0000256" key="2">
    <source>
        <dbReference type="SAM" id="MobiDB-lite"/>
    </source>
</evidence>
<evidence type="ECO:0000269" key="3">
    <source>
    </source>
</evidence>
<evidence type="ECO:0007829" key="4">
    <source>
        <dbReference type="PDB" id="7LD5"/>
    </source>
</evidence>
<protein>
    <recommendedName>
        <fullName evidence="1">Polyribonucleotide nucleotidyltransferase</fullName>
        <ecNumber evidence="1">2.7.7.8</ecNumber>
    </recommendedName>
    <alternativeName>
        <fullName evidence="1">Polynucleotide phosphorylase</fullName>
        <shortName evidence="1">PNPase</shortName>
    </alternativeName>
</protein>